<reference key="1">
    <citation type="journal article" date="2010" name="PLoS ONE">
        <title>De Novo assembly of the complete genome of an enhanced electricity-producing variant of Geobacter sulfurreducens using only short reads.</title>
        <authorList>
            <person name="Nagarajan H."/>
            <person name="Butler J.E."/>
            <person name="Klimes A."/>
            <person name="Qiu Y."/>
            <person name="Zengler K."/>
            <person name="Ward J."/>
            <person name="Young N.D."/>
            <person name="Methe B.A."/>
            <person name="Palsson B.O."/>
            <person name="Lovley D.R."/>
            <person name="Barrett C.L."/>
        </authorList>
    </citation>
    <scope>NUCLEOTIDE SEQUENCE [LARGE SCALE GENOMIC DNA]</scope>
    <source>
        <strain>DL-1 / KN400</strain>
    </source>
</reference>
<reference key="2">
    <citation type="journal article" date="2003" name="J. Bacteriol.">
        <title>OmcB, a c-type polyheme cytochrome, involved in Fe(III) reduction in Geobacter sulfurreducens.</title>
        <authorList>
            <person name="Leang C."/>
            <person name="Coppi M.V."/>
            <person name="Lovley D.R."/>
        </authorList>
    </citation>
    <scope>FUNCTION</scope>
    <scope>DISRUPTION PHENOTYPE</scope>
    <scope>SUBCELLULAR LOCATION</scope>
    <source>
        <strain>DL-1 / KN400</strain>
    </source>
</reference>
<reference key="3">
    <citation type="journal article" date="2007" name="FEMS Microbiol. Lett.">
        <title>Evidence that OmcB and OmpB of Geobacter sulfurreducens are outer membrane surface proteins.</title>
        <authorList>
            <person name="Qian X."/>
            <person name="Reguera G."/>
            <person name="Mester T."/>
            <person name="Lovley D.R."/>
        </authorList>
    </citation>
    <scope>SUBCELLULAR LOCATION</scope>
    <source>
        <strain>DL-1 / KN400</strain>
    </source>
</reference>
<accession>D7ALQ0</accession>
<dbReference type="EMBL" id="CP002031">
    <property type="protein sequence ID" value="ADI85489.1"/>
    <property type="molecule type" value="Genomic_DNA"/>
</dbReference>
<dbReference type="RefSeq" id="WP_010943369.1">
    <property type="nucleotide sequence ID" value="NC_017454.1"/>
</dbReference>
<dbReference type="KEGG" id="gsk:KN400_2677"/>
<dbReference type="PATRIC" id="fig|663917.3.peg.2683"/>
<dbReference type="HOGENOM" id="CLU_355545_0_0_7"/>
<dbReference type="GO" id="GO:0009279">
    <property type="term" value="C:cell outer membrane"/>
    <property type="evidence" value="ECO:0007669"/>
    <property type="project" value="UniProtKB-SubCell"/>
</dbReference>
<dbReference type="GO" id="GO:0046872">
    <property type="term" value="F:metal ion binding"/>
    <property type="evidence" value="ECO:0007669"/>
    <property type="project" value="UniProtKB-KW"/>
</dbReference>
<dbReference type="FunFam" id="1.10.1130.10:FF:000006">
    <property type="entry name" value="C-type polyheme cytochrome OmcB"/>
    <property type="match status" value="1"/>
</dbReference>
<dbReference type="Gene3D" id="1.10.1130.10">
    <property type="entry name" value="Flavocytochrome C3, Chain A"/>
    <property type="match status" value="2"/>
</dbReference>
<dbReference type="InterPro" id="IPR036280">
    <property type="entry name" value="Multihaem_cyt_sf"/>
</dbReference>
<dbReference type="PANTHER" id="PTHR39425:SF1">
    <property type="entry name" value="CYTOCHROME C7-LIKE DOMAIN-CONTAINING PROTEIN"/>
    <property type="match status" value="1"/>
</dbReference>
<dbReference type="PANTHER" id="PTHR39425">
    <property type="entry name" value="LIPOPROTEIN CYTOCHROME C"/>
    <property type="match status" value="1"/>
</dbReference>
<dbReference type="SUPFAM" id="SSF48695">
    <property type="entry name" value="Multiheme cytochromes"/>
    <property type="match status" value="2"/>
</dbReference>
<dbReference type="PROSITE" id="PS51008">
    <property type="entry name" value="MULTIHEME_CYTC"/>
    <property type="match status" value="1"/>
</dbReference>
<dbReference type="PROSITE" id="PS51257">
    <property type="entry name" value="PROKAR_LIPOPROTEIN"/>
    <property type="match status" value="1"/>
</dbReference>
<comment type="function">
    <text evidence="3">Involved in anaerobic respiration with Fe(3+) as terminal electron acceptor. Acts as an electron-transport mediator in the dissimilatory reduction of Fe(3+).</text>
</comment>
<comment type="subcellular location">
    <subcellularLocation>
        <location evidence="5 6">Cell outer membrane</location>
        <topology evidence="4">Lipid-anchor</topology>
    </subcellularLocation>
</comment>
<comment type="PTM">
    <text evidence="4">Binds 12 heme c groups per subunit.</text>
</comment>
<comment type="disruption phenotype">
    <text evidence="3">No impact on growth with fumarate, but greatly impaired in the ability to reduce Fe(3+).</text>
</comment>
<proteinExistence type="inferred from homology"/>
<protein>
    <recommendedName>
        <fullName>C-type polyheme cytochrome OmcB</fullName>
    </recommendedName>
    <alternativeName>
        <fullName>Outer membrane c-type cytochrome B</fullName>
    </alternativeName>
</protein>
<name>CYCB_GEOSK</name>
<evidence type="ECO:0000250" key="1"/>
<evidence type="ECO:0000255" key="2"/>
<evidence type="ECO:0000269" key="3">
    <source>
    </source>
</evidence>
<evidence type="ECO:0000305" key="4"/>
<evidence type="ECO:0000305" key="5">
    <source>
    </source>
</evidence>
<evidence type="ECO:0000305" key="6">
    <source>
    </source>
</evidence>
<feature type="signal peptide" evidence="2">
    <location>
        <begin position="1"/>
        <end position="23"/>
    </location>
</feature>
<feature type="chain" id="PRO_0000429041" description="C-type polyheme cytochrome OmcB" evidence="1">
    <location>
        <begin position="24"/>
        <end position="744"/>
    </location>
</feature>
<feature type="binding site" description="covalent" evidence="2">
    <location>
        <position position="48"/>
    </location>
    <ligand>
        <name>heme c</name>
        <dbReference type="ChEBI" id="CHEBI:61717"/>
        <label>1</label>
    </ligand>
</feature>
<feature type="binding site" description="covalent" evidence="2">
    <location>
        <position position="51"/>
    </location>
    <ligand>
        <name>heme c</name>
        <dbReference type="ChEBI" id="CHEBI:61717"/>
        <label>1</label>
    </ligand>
</feature>
<feature type="binding site" description="axial binding residue" evidence="2">
    <location>
        <position position="52"/>
    </location>
    <ligand>
        <name>heme c</name>
        <dbReference type="ChEBI" id="CHEBI:61717"/>
        <label>1</label>
    </ligand>
    <ligandPart>
        <name>Fe</name>
        <dbReference type="ChEBI" id="CHEBI:18248"/>
    </ligandPart>
</feature>
<feature type="binding site" description="covalent" evidence="2">
    <location>
        <position position="81"/>
    </location>
    <ligand>
        <name>heme c</name>
        <dbReference type="ChEBI" id="CHEBI:61717"/>
        <label>2</label>
    </ligand>
</feature>
<feature type="binding site" description="covalent" evidence="2">
    <location>
        <position position="84"/>
    </location>
    <ligand>
        <name>heme c</name>
        <dbReference type="ChEBI" id="CHEBI:61717"/>
        <label>2</label>
    </ligand>
</feature>
<feature type="binding site" description="axial binding residue" evidence="2">
    <location>
        <position position="85"/>
    </location>
    <ligand>
        <name>heme c</name>
        <dbReference type="ChEBI" id="CHEBI:61717"/>
        <label>2</label>
    </ligand>
    <ligandPart>
        <name>Fe</name>
        <dbReference type="ChEBI" id="CHEBI:18248"/>
    </ligandPart>
</feature>
<feature type="binding site" description="covalent" evidence="2">
    <location>
        <position position="107"/>
    </location>
    <ligand>
        <name>heme c</name>
        <dbReference type="ChEBI" id="CHEBI:61717"/>
        <label>3</label>
    </ligand>
</feature>
<feature type="binding site" description="covalent" evidence="2">
    <location>
        <position position="110"/>
    </location>
    <ligand>
        <name>heme c</name>
        <dbReference type="ChEBI" id="CHEBI:61717"/>
        <label>3</label>
    </ligand>
</feature>
<feature type="binding site" description="axial binding residue" evidence="2">
    <location>
        <position position="111"/>
    </location>
    <ligand>
        <name>heme c</name>
        <dbReference type="ChEBI" id="CHEBI:61717"/>
        <label>3</label>
    </ligand>
    <ligandPart>
        <name>Fe</name>
        <dbReference type="ChEBI" id="CHEBI:18248"/>
    </ligandPart>
</feature>
<feature type="binding site" description="covalent" evidence="2">
    <location>
        <position position="141"/>
    </location>
    <ligand>
        <name>heme c</name>
        <dbReference type="ChEBI" id="CHEBI:61717"/>
        <label>4</label>
    </ligand>
</feature>
<feature type="binding site" description="covalent" evidence="2">
    <location>
        <position position="144"/>
    </location>
    <ligand>
        <name>heme c</name>
        <dbReference type="ChEBI" id="CHEBI:61717"/>
        <label>4</label>
    </ligand>
</feature>
<feature type="binding site" description="axial binding residue" evidence="2">
    <location>
        <position position="145"/>
    </location>
    <ligand>
        <name>heme c</name>
        <dbReference type="ChEBI" id="CHEBI:61717"/>
        <label>4</label>
    </ligand>
    <ligandPart>
        <name>Fe</name>
        <dbReference type="ChEBI" id="CHEBI:18248"/>
    </ligandPart>
</feature>
<feature type="binding site" description="covalent" evidence="2">
    <location>
        <position position="185"/>
    </location>
    <ligand>
        <name>heme c</name>
        <dbReference type="ChEBI" id="CHEBI:61717"/>
        <label>5</label>
    </ligand>
</feature>
<feature type="binding site" description="covalent" evidence="2">
    <location>
        <position position="188"/>
    </location>
    <ligand>
        <name>heme c</name>
        <dbReference type="ChEBI" id="CHEBI:61717"/>
        <label>5</label>
    </ligand>
</feature>
<feature type="binding site" description="axial binding residue" evidence="2">
    <location>
        <position position="189"/>
    </location>
    <ligand>
        <name>heme c</name>
        <dbReference type="ChEBI" id="CHEBI:61717"/>
        <label>5</label>
    </ligand>
    <ligandPart>
        <name>Fe</name>
        <dbReference type="ChEBI" id="CHEBI:18248"/>
    </ligandPart>
</feature>
<feature type="binding site" description="covalent" evidence="2">
    <location>
        <position position="225"/>
    </location>
    <ligand>
        <name>heme c</name>
        <dbReference type="ChEBI" id="CHEBI:61717"/>
        <label>6</label>
    </ligand>
</feature>
<feature type="binding site" description="covalent" evidence="2">
    <location>
        <position position="228"/>
    </location>
    <ligand>
        <name>heme c</name>
        <dbReference type="ChEBI" id="CHEBI:61717"/>
        <label>6</label>
    </ligand>
</feature>
<feature type="binding site" description="axial binding residue" evidence="2">
    <location>
        <position position="229"/>
    </location>
    <ligand>
        <name>heme c</name>
        <dbReference type="ChEBI" id="CHEBI:61717"/>
        <label>6</label>
    </ligand>
    <ligandPart>
        <name>Fe</name>
        <dbReference type="ChEBI" id="CHEBI:18248"/>
    </ligandPart>
</feature>
<feature type="binding site" description="covalent" evidence="2">
    <location>
        <position position="303"/>
    </location>
    <ligand>
        <name>heme c</name>
        <dbReference type="ChEBI" id="CHEBI:61717"/>
        <label>7</label>
    </ligand>
</feature>
<feature type="binding site" description="covalent" evidence="2">
    <location>
        <position position="306"/>
    </location>
    <ligand>
        <name>heme c</name>
        <dbReference type="ChEBI" id="CHEBI:61717"/>
        <label>7</label>
    </ligand>
</feature>
<feature type="binding site" description="axial binding residue" evidence="2">
    <location>
        <position position="307"/>
    </location>
    <ligand>
        <name>heme c</name>
        <dbReference type="ChEBI" id="CHEBI:61717"/>
        <label>7</label>
    </ligand>
    <ligandPart>
        <name>Fe</name>
        <dbReference type="ChEBI" id="CHEBI:18248"/>
    </ligandPart>
</feature>
<feature type="binding site" description="covalent" evidence="2">
    <location>
        <position position="382"/>
    </location>
    <ligand>
        <name>heme c</name>
        <dbReference type="ChEBI" id="CHEBI:61717"/>
        <label>8</label>
    </ligand>
</feature>
<feature type="binding site" description="covalent" evidence="2">
    <location>
        <position position="385"/>
    </location>
    <ligand>
        <name>heme c</name>
        <dbReference type="ChEBI" id="CHEBI:61717"/>
        <label>8</label>
    </ligand>
</feature>
<feature type="binding site" description="axial binding residue" evidence="2">
    <location>
        <position position="386"/>
    </location>
    <ligand>
        <name>heme c</name>
        <dbReference type="ChEBI" id="CHEBI:61717"/>
        <label>8</label>
    </ligand>
    <ligandPart>
        <name>Fe</name>
        <dbReference type="ChEBI" id="CHEBI:18248"/>
    </ligandPart>
</feature>
<feature type="binding site" description="covalent" evidence="2">
    <location>
        <position position="430"/>
    </location>
    <ligand>
        <name>heme c</name>
        <dbReference type="ChEBI" id="CHEBI:61717"/>
        <label>9</label>
    </ligand>
</feature>
<feature type="binding site" description="covalent" evidence="2">
    <location>
        <position position="433"/>
    </location>
    <ligand>
        <name>heme c</name>
        <dbReference type="ChEBI" id="CHEBI:61717"/>
        <label>9</label>
    </ligand>
</feature>
<feature type="binding site" description="axial binding residue" evidence="2">
    <location>
        <position position="434"/>
    </location>
    <ligand>
        <name>heme c</name>
        <dbReference type="ChEBI" id="CHEBI:61717"/>
        <label>9</label>
    </ligand>
    <ligandPart>
        <name>Fe</name>
        <dbReference type="ChEBI" id="CHEBI:18248"/>
    </ligandPart>
</feature>
<feature type="binding site" description="covalent" evidence="2">
    <location>
        <position position="480"/>
    </location>
    <ligand>
        <name>heme c</name>
        <dbReference type="ChEBI" id="CHEBI:61717"/>
        <label>10</label>
    </ligand>
</feature>
<feature type="binding site" description="covalent" evidence="2">
    <location>
        <position position="483"/>
    </location>
    <ligand>
        <name>heme c</name>
        <dbReference type="ChEBI" id="CHEBI:61717"/>
        <label>10</label>
    </ligand>
</feature>
<feature type="binding site" description="axial binding residue" evidence="2">
    <location>
        <position position="484"/>
    </location>
    <ligand>
        <name>heme c</name>
        <dbReference type="ChEBI" id="CHEBI:61717"/>
        <label>10</label>
    </ligand>
    <ligandPart>
        <name>Fe</name>
        <dbReference type="ChEBI" id="CHEBI:18248"/>
    </ligandPart>
</feature>
<feature type="binding site" description="covalent" evidence="2">
    <location>
        <position position="555"/>
    </location>
    <ligand>
        <name>heme c</name>
        <dbReference type="ChEBI" id="CHEBI:61717"/>
        <label>11</label>
    </ligand>
</feature>
<feature type="binding site" description="covalent" evidence="2">
    <location>
        <position position="558"/>
    </location>
    <ligand>
        <name>heme c</name>
        <dbReference type="ChEBI" id="CHEBI:61717"/>
        <label>11</label>
    </ligand>
</feature>
<feature type="binding site" description="axial binding residue" evidence="2">
    <location>
        <position position="559"/>
    </location>
    <ligand>
        <name>heme c</name>
        <dbReference type="ChEBI" id="CHEBI:61717"/>
        <label>11</label>
    </ligand>
    <ligandPart>
        <name>Fe</name>
        <dbReference type="ChEBI" id="CHEBI:18248"/>
    </ligandPart>
</feature>
<feature type="binding site" description="covalent" evidence="2">
    <location>
        <position position="587"/>
    </location>
    <ligand>
        <name>heme c</name>
        <dbReference type="ChEBI" id="CHEBI:61717"/>
        <label>12</label>
    </ligand>
</feature>
<feature type="binding site" description="covalent" evidence="2">
    <location>
        <position position="590"/>
    </location>
    <ligand>
        <name>heme c</name>
        <dbReference type="ChEBI" id="CHEBI:61717"/>
        <label>12</label>
    </ligand>
</feature>
<feature type="binding site" description="axial binding residue" evidence="2">
    <location>
        <position position="591"/>
    </location>
    <ligand>
        <name>heme c</name>
        <dbReference type="ChEBI" id="CHEBI:61717"/>
        <label>12</label>
    </ligand>
    <ligandPart>
        <name>Fe</name>
        <dbReference type="ChEBI" id="CHEBI:18248"/>
    </ligandPart>
</feature>
<feature type="lipid moiety-binding region" description="N-palmitoyl cysteine" evidence="1">
    <location>
        <position position="24"/>
    </location>
</feature>
<feature type="lipid moiety-binding region" description="S-diacylglycerol cysteine" evidence="2">
    <location>
        <position position="24"/>
    </location>
</feature>
<organism>
    <name type="scientific">Geobacter sulfurreducens (strain DL-1 / KN400)</name>
    <dbReference type="NCBI Taxonomy" id="663917"/>
    <lineage>
        <taxon>Bacteria</taxon>
        <taxon>Pseudomonadati</taxon>
        <taxon>Thermodesulfobacteriota</taxon>
        <taxon>Desulfuromonadia</taxon>
        <taxon>Geobacterales</taxon>
        <taxon>Geobacteraceae</taxon>
        <taxon>Geobacter</taxon>
    </lineage>
</organism>
<keyword id="KW-0998">Cell outer membrane</keyword>
<keyword id="KW-0249">Electron transport</keyword>
<keyword id="KW-0349">Heme</keyword>
<keyword id="KW-0408">Iron</keyword>
<keyword id="KW-0449">Lipoprotein</keyword>
<keyword id="KW-0472">Membrane</keyword>
<keyword id="KW-0479">Metal-binding</keyword>
<keyword id="KW-0564">Palmitate</keyword>
<keyword id="KW-0732">Signal</keyword>
<keyword id="KW-0813">Transport</keyword>
<sequence>MSRKVTKYSAVLAVSLFAAALAGCGSENKEGTVGTGPGGVATVGDSACVQCHSAVTEALTGESLIAQYQKSSPHNTAGLGCESCHGGGAQHNGVGPIPFAQPDASRCADCHDGTTAVATNSDTAFAESRHNIQTIRSGATCRRCHTHEGAVLSNIAGYTGDLATLEDTVNQNKVPLVSSYSQISCATCHEHGGGLRTIKATNGAAGPVVNWDPNNNRTVDQFDLCTSCHNMYSYNGSTLLTNGVPVNGVATGTVGHHETTWYRIIATTHFDNYSTGPQAGAGASGTNAKVEGYVLRRTGANPCFDCHGHEAKTNTRPGRDATIHTDWAKSAHAGGLLTAKYNAVGALTGAAAVNAAMNAYVDDTTAIAWTHYNWDASSRGSCQRCHTATGAANFMSNPAGYDPTGAGNSFSHLQGWSAANGSKQNELLYCWGCHTNAGTGELRNPGAITENYAGVNSTSTGTTGTAVTISYPDIAGSNVCMTCHLGREAGENIKAITDADGILGFVNSHYLAAGGQLFGKTGYEYATRSYAKPTFFAHDKIGTAAAPGTGTNGPCAGCHMTTPNSHSFLPVTKDGTGAVTAITSTACATCHAGAYALTPEALTAEEEEYVASLEALKAALAGKGILFFNAHPYFYRDTNANGIGDPGELVSSNAFTNWAGVYGLALWKDVMGAAFNANLLIHDPGGYAHNRFYVKRLIWDSIDFIYDGVLNNDVTAAIDAQVTATRLDSATATAAKAYLGTTRP</sequence>
<gene>
    <name type="primary">omcB</name>
    <name type="ordered locus">KN400_2677</name>
</gene>